<evidence type="ECO:0000255" key="1">
    <source>
        <dbReference type="HAMAP-Rule" id="MF_01368"/>
    </source>
</evidence>
<evidence type="ECO:0000305" key="2"/>
<comment type="subunit">
    <text evidence="1">Part of the 50S ribosomal subunit. Contacts protein L32.</text>
</comment>
<comment type="similarity">
    <text evidence="1">Belongs to the bacterial ribosomal protein bL17 family.</text>
</comment>
<name>RL17_KOSOT</name>
<gene>
    <name evidence="1" type="primary">rplQ</name>
    <name type="ordered locus">Kole_1873</name>
</gene>
<reference key="1">
    <citation type="submission" date="2009-06" db="EMBL/GenBank/DDBJ databases">
        <title>Complete sequence of Thermotogales bacterium TBF 19.5.1.</title>
        <authorList>
            <consortium name="US DOE Joint Genome Institute"/>
            <person name="Lucas S."/>
            <person name="Copeland A."/>
            <person name="Lapidus A."/>
            <person name="Glavina del Rio T."/>
            <person name="Tice H."/>
            <person name="Bruce D."/>
            <person name="Goodwin L."/>
            <person name="Pitluck S."/>
            <person name="Chertkov O."/>
            <person name="Brettin T."/>
            <person name="Detter J.C."/>
            <person name="Han C."/>
            <person name="Schmutz J."/>
            <person name="Larimer F."/>
            <person name="Land M."/>
            <person name="Hauser L."/>
            <person name="Kyrpides N."/>
            <person name="Ovchinnikova G."/>
            <person name="Noll K."/>
        </authorList>
    </citation>
    <scope>NUCLEOTIDE SEQUENCE [LARGE SCALE GENOMIC DNA]</scope>
    <source>
        <strain>ATCC BAA-1733 / DSM 21960 / TBF 19.5.1</strain>
    </source>
</reference>
<sequence>MRHRVKKKKLNRPHSQRLALMRGLARELFEHGTIITTTAKAKAVKPFVESIITKAKKAALYAKEINERSNGDPEIQALRSKNVALRREINRHFNDRKLVKKICDEIAVNYIDRNGGYTRIIKVGRRRGDAAELSILQLVETKSEENVEN</sequence>
<keyword id="KW-1185">Reference proteome</keyword>
<keyword id="KW-0687">Ribonucleoprotein</keyword>
<keyword id="KW-0689">Ribosomal protein</keyword>
<proteinExistence type="inferred from homology"/>
<accession>C5CGH3</accession>
<feature type="chain" id="PRO_1000215012" description="Large ribosomal subunit protein bL17">
    <location>
        <begin position="1"/>
        <end position="149"/>
    </location>
</feature>
<protein>
    <recommendedName>
        <fullName evidence="1">Large ribosomal subunit protein bL17</fullName>
    </recommendedName>
    <alternativeName>
        <fullName evidence="2">50S ribosomal protein L17</fullName>
    </alternativeName>
</protein>
<organism>
    <name type="scientific">Kosmotoga olearia (strain ATCC BAA-1733 / DSM 21960 / TBF 19.5.1)</name>
    <dbReference type="NCBI Taxonomy" id="521045"/>
    <lineage>
        <taxon>Bacteria</taxon>
        <taxon>Thermotogati</taxon>
        <taxon>Thermotogota</taxon>
        <taxon>Thermotogae</taxon>
        <taxon>Kosmotogales</taxon>
        <taxon>Kosmotogaceae</taxon>
        <taxon>Kosmotoga</taxon>
    </lineage>
</organism>
<dbReference type="EMBL" id="CP001634">
    <property type="protein sequence ID" value="ACR80554.1"/>
    <property type="molecule type" value="Genomic_DNA"/>
</dbReference>
<dbReference type="RefSeq" id="WP_015869197.1">
    <property type="nucleotide sequence ID" value="NC_012785.1"/>
</dbReference>
<dbReference type="SMR" id="C5CGH3"/>
<dbReference type="STRING" id="521045.Kole_1873"/>
<dbReference type="KEGG" id="kol:Kole_1873"/>
<dbReference type="eggNOG" id="COG0203">
    <property type="taxonomic scope" value="Bacteria"/>
</dbReference>
<dbReference type="HOGENOM" id="CLU_074407_2_2_0"/>
<dbReference type="OrthoDB" id="9809073at2"/>
<dbReference type="Proteomes" id="UP000002382">
    <property type="component" value="Chromosome"/>
</dbReference>
<dbReference type="GO" id="GO:0022625">
    <property type="term" value="C:cytosolic large ribosomal subunit"/>
    <property type="evidence" value="ECO:0007669"/>
    <property type="project" value="TreeGrafter"/>
</dbReference>
<dbReference type="GO" id="GO:0003735">
    <property type="term" value="F:structural constituent of ribosome"/>
    <property type="evidence" value="ECO:0007669"/>
    <property type="project" value="InterPro"/>
</dbReference>
<dbReference type="GO" id="GO:0006412">
    <property type="term" value="P:translation"/>
    <property type="evidence" value="ECO:0007669"/>
    <property type="project" value="UniProtKB-UniRule"/>
</dbReference>
<dbReference type="Gene3D" id="3.90.1030.10">
    <property type="entry name" value="Ribosomal protein L17"/>
    <property type="match status" value="1"/>
</dbReference>
<dbReference type="HAMAP" id="MF_01368">
    <property type="entry name" value="Ribosomal_bL17"/>
    <property type="match status" value="1"/>
</dbReference>
<dbReference type="InterPro" id="IPR000456">
    <property type="entry name" value="Ribosomal_bL17"/>
</dbReference>
<dbReference type="InterPro" id="IPR047859">
    <property type="entry name" value="Ribosomal_bL17_CS"/>
</dbReference>
<dbReference type="InterPro" id="IPR036373">
    <property type="entry name" value="Ribosomal_bL17_sf"/>
</dbReference>
<dbReference type="NCBIfam" id="TIGR00059">
    <property type="entry name" value="L17"/>
    <property type="match status" value="1"/>
</dbReference>
<dbReference type="PANTHER" id="PTHR14413:SF16">
    <property type="entry name" value="LARGE RIBOSOMAL SUBUNIT PROTEIN BL17M"/>
    <property type="match status" value="1"/>
</dbReference>
<dbReference type="PANTHER" id="PTHR14413">
    <property type="entry name" value="RIBOSOMAL PROTEIN L17"/>
    <property type="match status" value="1"/>
</dbReference>
<dbReference type="Pfam" id="PF01196">
    <property type="entry name" value="Ribosomal_L17"/>
    <property type="match status" value="1"/>
</dbReference>
<dbReference type="SUPFAM" id="SSF64263">
    <property type="entry name" value="Prokaryotic ribosomal protein L17"/>
    <property type="match status" value="1"/>
</dbReference>
<dbReference type="PROSITE" id="PS01167">
    <property type="entry name" value="RIBOSOMAL_L17"/>
    <property type="match status" value="1"/>
</dbReference>